<proteinExistence type="evidence at transcript level"/>
<name>PARM1_PONAB</name>
<accession>Q5RAF8</accession>
<gene>
    <name type="primary">PARM1</name>
</gene>
<evidence type="ECO:0000250" key="1"/>
<evidence type="ECO:0000250" key="2">
    <source>
        <dbReference type="UniProtKB" id="Q6P9X9"/>
    </source>
</evidence>
<evidence type="ECO:0000255" key="3"/>
<evidence type="ECO:0000256" key="4">
    <source>
        <dbReference type="SAM" id="MobiDB-lite"/>
    </source>
</evidence>
<evidence type="ECO:0000305" key="5"/>
<feature type="signal peptide" evidence="1">
    <location>
        <begin position="1"/>
        <end position="20"/>
    </location>
</feature>
<feature type="chain" id="PRO_0000045500" description="Prostate androgen-regulated mucin-like protein 1 homolog">
    <location>
        <begin position="21"/>
        <end position="310"/>
    </location>
</feature>
<feature type="topological domain" description="Extracellular" evidence="3">
    <location>
        <begin position="21"/>
        <end position="258"/>
    </location>
</feature>
<feature type="transmembrane region" description="Helical" evidence="3">
    <location>
        <begin position="259"/>
        <end position="279"/>
    </location>
</feature>
<feature type="topological domain" description="Cytoplasmic" evidence="3">
    <location>
        <begin position="280"/>
        <end position="310"/>
    </location>
</feature>
<feature type="region of interest" description="Disordered" evidence="4">
    <location>
        <begin position="40"/>
        <end position="224"/>
    </location>
</feature>
<feature type="compositionally biased region" description="Polar residues" evidence="4">
    <location>
        <begin position="40"/>
        <end position="74"/>
    </location>
</feature>
<feature type="compositionally biased region" description="Polar residues" evidence="4">
    <location>
        <begin position="92"/>
        <end position="103"/>
    </location>
</feature>
<feature type="compositionally biased region" description="Low complexity" evidence="4">
    <location>
        <begin position="150"/>
        <end position="209"/>
    </location>
</feature>
<feature type="modified residue" description="Phosphoserine" evidence="2">
    <location>
        <position position="298"/>
    </location>
</feature>
<feature type="glycosylation site" description="N-linked (GlcNAc...) asparagine" evidence="3">
    <location>
        <position position="58"/>
    </location>
</feature>
<feature type="glycosylation site" description="N-linked (GlcNAc...) asparagine" evidence="3">
    <location>
        <position position="62"/>
    </location>
</feature>
<feature type="glycosylation site" description="N-linked (GlcNAc...) asparagine" evidence="3">
    <location>
        <position position="80"/>
    </location>
</feature>
<feature type="glycosylation site" description="N-linked (GlcNAc...) asparagine" evidence="3">
    <location>
        <position position="176"/>
    </location>
</feature>
<sequence>MVYKTLFALCILTAGWRVQSLPTSAPLSVSLPTNIMPPTTIWTSSPQNTDADTASPSNGTHNNSVLPVTASAPTSLLPKNISVESREEEITSPGSNWEGTNTDPSPPGFSSTSGGVHLTTTLEEHSLGTPEAGVAATLSQSAAEPPTLISPQAPASSPSSLSTSPPEVFSVSVTTNHSSTVTSTQPTGAPTAPESPTEESSSDHTPTSHATAEPVPQEKTPPTTVSGKVMCELIDMETTTTFPRVIMQEVEHALSSGSIAAITVTVIAVVLLVFGVAAYLKIRHSSYGRLLDDHDYGSWGNYNNPLYDDS</sequence>
<keyword id="KW-1003">Cell membrane</keyword>
<keyword id="KW-0967">Endosome</keyword>
<keyword id="KW-0325">Glycoprotein</keyword>
<keyword id="KW-0333">Golgi apparatus</keyword>
<keyword id="KW-0472">Membrane</keyword>
<keyword id="KW-0597">Phosphoprotein</keyword>
<keyword id="KW-1185">Reference proteome</keyword>
<keyword id="KW-0732">Signal</keyword>
<keyword id="KW-0812">Transmembrane</keyword>
<keyword id="KW-1133">Transmembrane helix</keyword>
<protein>
    <recommendedName>
        <fullName>Prostate androgen-regulated mucin-like protein 1 homolog</fullName>
        <shortName>PARM-1</shortName>
    </recommendedName>
</protein>
<reference key="1">
    <citation type="submission" date="2004-11" db="EMBL/GenBank/DDBJ databases">
        <authorList>
            <consortium name="The German cDNA consortium"/>
        </authorList>
    </citation>
    <scope>NUCLEOTIDE SEQUENCE [LARGE SCALE MRNA]</scope>
    <source>
        <tissue>Kidney</tissue>
    </source>
</reference>
<organism>
    <name type="scientific">Pongo abelii</name>
    <name type="common">Sumatran orangutan</name>
    <name type="synonym">Pongo pygmaeus abelii</name>
    <dbReference type="NCBI Taxonomy" id="9601"/>
    <lineage>
        <taxon>Eukaryota</taxon>
        <taxon>Metazoa</taxon>
        <taxon>Chordata</taxon>
        <taxon>Craniata</taxon>
        <taxon>Vertebrata</taxon>
        <taxon>Euteleostomi</taxon>
        <taxon>Mammalia</taxon>
        <taxon>Eutheria</taxon>
        <taxon>Euarchontoglires</taxon>
        <taxon>Primates</taxon>
        <taxon>Haplorrhini</taxon>
        <taxon>Catarrhini</taxon>
        <taxon>Hominidae</taxon>
        <taxon>Pongo</taxon>
    </lineage>
</organism>
<comment type="function">
    <text evidence="1">May regulate TLP1 expression and telomerase activity, thus enabling certain prostatic cells to resist apoptosis.</text>
</comment>
<comment type="subcellular location">
    <subcellularLocation>
        <location evidence="1">Cell membrane</location>
        <topology evidence="1">Single-pass type I membrane protein</topology>
    </subcellularLocation>
    <subcellularLocation>
        <location evidence="1">Golgi apparatus membrane</location>
        <topology evidence="1">Single-pass type I membrane protein</topology>
    </subcellularLocation>
    <subcellularLocation>
        <location evidence="1">Endosome membrane</location>
        <topology evidence="1">Single-pass type I membrane protein</topology>
    </subcellularLocation>
</comment>
<comment type="PTM">
    <text evidence="1">Highly N-glycosylated and O-glycosylated.</text>
</comment>
<comment type="similarity">
    <text evidence="5">Belongs to the PARM family.</text>
</comment>
<dbReference type="EMBL" id="CR859059">
    <property type="protein sequence ID" value="CAH91252.1"/>
    <property type="molecule type" value="mRNA"/>
</dbReference>
<dbReference type="RefSeq" id="NP_001127394.1">
    <property type="nucleotide sequence ID" value="NM_001133922.1"/>
</dbReference>
<dbReference type="SMR" id="Q5RAF8"/>
<dbReference type="FunCoup" id="Q5RAF8">
    <property type="interactions" value="483"/>
</dbReference>
<dbReference type="GlyCosmos" id="Q5RAF8">
    <property type="glycosylation" value="4 sites, No reported glycans"/>
</dbReference>
<dbReference type="Ensembl" id="ENSPPYT00000037109.1">
    <property type="protein sequence ID" value="ENSPPYP00000036653.1"/>
    <property type="gene ID" value="ENSPPYG00000014840.3"/>
</dbReference>
<dbReference type="GeneID" id="100174461"/>
<dbReference type="KEGG" id="pon:100174461"/>
<dbReference type="CTD" id="25849"/>
<dbReference type="eggNOG" id="ENOG502S50N">
    <property type="taxonomic scope" value="Eukaryota"/>
</dbReference>
<dbReference type="GeneTree" id="ENSGT00390000014545"/>
<dbReference type="HOGENOM" id="CLU_898790_0_0_1"/>
<dbReference type="InParanoid" id="Q5RAF8"/>
<dbReference type="OMA" id="ASHWEGT"/>
<dbReference type="OrthoDB" id="8963138at2759"/>
<dbReference type="Proteomes" id="UP000001595">
    <property type="component" value="Chromosome 4"/>
</dbReference>
<dbReference type="GO" id="GO:0005829">
    <property type="term" value="C:cytosol"/>
    <property type="evidence" value="ECO:0007669"/>
    <property type="project" value="Ensembl"/>
</dbReference>
<dbReference type="GO" id="GO:0005769">
    <property type="term" value="C:early endosome"/>
    <property type="evidence" value="ECO:0000250"/>
    <property type="project" value="UniProtKB"/>
</dbReference>
<dbReference type="GO" id="GO:0010008">
    <property type="term" value="C:endosome membrane"/>
    <property type="evidence" value="ECO:0007669"/>
    <property type="project" value="UniProtKB-SubCell"/>
</dbReference>
<dbReference type="GO" id="GO:0005794">
    <property type="term" value="C:Golgi apparatus"/>
    <property type="evidence" value="ECO:0000250"/>
    <property type="project" value="UniProtKB"/>
</dbReference>
<dbReference type="GO" id="GO:0000139">
    <property type="term" value="C:Golgi membrane"/>
    <property type="evidence" value="ECO:0007669"/>
    <property type="project" value="UniProtKB-SubCell"/>
</dbReference>
<dbReference type="GO" id="GO:0005770">
    <property type="term" value="C:late endosome"/>
    <property type="evidence" value="ECO:0000250"/>
    <property type="project" value="UniProtKB"/>
</dbReference>
<dbReference type="GO" id="GO:0005654">
    <property type="term" value="C:nucleoplasm"/>
    <property type="evidence" value="ECO:0007669"/>
    <property type="project" value="Ensembl"/>
</dbReference>
<dbReference type="GO" id="GO:0005886">
    <property type="term" value="C:plasma membrane"/>
    <property type="evidence" value="ECO:0000250"/>
    <property type="project" value="UniProtKB"/>
</dbReference>
<dbReference type="InterPro" id="IPR031431">
    <property type="entry name" value="PARM1"/>
</dbReference>
<dbReference type="PANTHER" id="PTHR35453">
    <property type="entry name" value="PROSTATE ANDROGEN-REGULATED MUCIN-LIKE PROTEIN 1"/>
    <property type="match status" value="1"/>
</dbReference>
<dbReference type="PANTHER" id="PTHR35453:SF1">
    <property type="entry name" value="PROSTATE ANDROGEN-REGULATED MUCIN-LIKE PROTEIN 1"/>
    <property type="match status" value="1"/>
</dbReference>
<dbReference type="Pfam" id="PF17061">
    <property type="entry name" value="PARM"/>
    <property type="match status" value="1"/>
</dbReference>